<reference key="1">
    <citation type="journal article" date="2008" name="Genome Biol.">
        <title>The complete genome, comparative and functional analysis of Stenotrophomonas maltophilia reveals an organism heavily shielded by drug resistance determinants.</title>
        <authorList>
            <person name="Crossman L.C."/>
            <person name="Gould V.C."/>
            <person name="Dow J.M."/>
            <person name="Vernikos G.S."/>
            <person name="Okazaki A."/>
            <person name="Sebaihia M."/>
            <person name="Saunders D."/>
            <person name="Arrowsmith C."/>
            <person name="Carver T."/>
            <person name="Peters N."/>
            <person name="Adlem E."/>
            <person name="Kerhornou A."/>
            <person name="Lord A."/>
            <person name="Murphy L."/>
            <person name="Seeger K."/>
            <person name="Squares R."/>
            <person name="Rutter S."/>
            <person name="Quail M.A."/>
            <person name="Rajandream M.A."/>
            <person name="Harris D."/>
            <person name="Churcher C."/>
            <person name="Bentley S.D."/>
            <person name="Parkhill J."/>
            <person name="Thomson N.R."/>
            <person name="Avison M.B."/>
        </authorList>
    </citation>
    <scope>NUCLEOTIDE SEQUENCE [LARGE SCALE GENOMIC DNA]</scope>
    <source>
        <strain>K279a</strain>
    </source>
</reference>
<comment type="function">
    <text evidence="1">Part of the twin-arginine translocation (Tat) system that transports large folded proteins containing a characteristic twin-arginine motif in their signal peptide across membranes. TatA could form the protein-conducting channel of the Tat system.</text>
</comment>
<comment type="subunit">
    <text evidence="1">The Tat system comprises two distinct complexes: a TatABC complex, containing multiple copies of TatA, TatB and TatC subunits, and a separate TatA complex, containing only TatA subunits. Substrates initially bind to the TatABC complex, which probably triggers association of the separate TatA complex to form the active translocon.</text>
</comment>
<comment type="subcellular location">
    <subcellularLocation>
        <location evidence="1">Cell inner membrane</location>
        <topology evidence="1">Single-pass membrane protein</topology>
    </subcellularLocation>
</comment>
<comment type="similarity">
    <text evidence="1">Belongs to the TatA/E family.</text>
</comment>
<name>TATA_STRMK</name>
<dbReference type="EMBL" id="AM743169">
    <property type="protein sequence ID" value="CAQ47994.1"/>
    <property type="molecule type" value="Genomic_DNA"/>
</dbReference>
<dbReference type="RefSeq" id="WP_005414932.1">
    <property type="nucleotide sequence ID" value="NC_010943.1"/>
</dbReference>
<dbReference type="SMR" id="B2FP54"/>
<dbReference type="EnsemblBacteria" id="CAQ47994">
    <property type="protein sequence ID" value="CAQ47994"/>
    <property type="gene ID" value="Smlt4641"/>
</dbReference>
<dbReference type="KEGG" id="sml:Smlt4641"/>
<dbReference type="PATRIC" id="fig|522373.3.peg.4375"/>
<dbReference type="eggNOG" id="COG1826">
    <property type="taxonomic scope" value="Bacteria"/>
</dbReference>
<dbReference type="HOGENOM" id="CLU_086034_5_3_6"/>
<dbReference type="Proteomes" id="UP000008840">
    <property type="component" value="Chromosome"/>
</dbReference>
<dbReference type="GO" id="GO:0033281">
    <property type="term" value="C:TAT protein transport complex"/>
    <property type="evidence" value="ECO:0007669"/>
    <property type="project" value="UniProtKB-UniRule"/>
</dbReference>
<dbReference type="GO" id="GO:0008320">
    <property type="term" value="F:protein transmembrane transporter activity"/>
    <property type="evidence" value="ECO:0007669"/>
    <property type="project" value="UniProtKB-UniRule"/>
</dbReference>
<dbReference type="GO" id="GO:0043953">
    <property type="term" value="P:protein transport by the Tat complex"/>
    <property type="evidence" value="ECO:0007669"/>
    <property type="project" value="UniProtKB-UniRule"/>
</dbReference>
<dbReference type="Gene3D" id="1.20.5.3310">
    <property type="match status" value="1"/>
</dbReference>
<dbReference type="HAMAP" id="MF_00236">
    <property type="entry name" value="TatA_E"/>
    <property type="match status" value="1"/>
</dbReference>
<dbReference type="InterPro" id="IPR003369">
    <property type="entry name" value="TatA/B/E"/>
</dbReference>
<dbReference type="InterPro" id="IPR006312">
    <property type="entry name" value="TatA/E"/>
</dbReference>
<dbReference type="NCBIfam" id="NF002813">
    <property type="entry name" value="PRK02958.1"/>
    <property type="match status" value="1"/>
</dbReference>
<dbReference type="NCBIfam" id="NF003393">
    <property type="entry name" value="PRK04561.1"/>
    <property type="match status" value="1"/>
</dbReference>
<dbReference type="NCBIfam" id="TIGR01411">
    <property type="entry name" value="tatAE"/>
    <property type="match status" value="1"/>
</dbReference>
<dbReference type="PANTHER" id="PTHR42982">
    <property type="entry name" value="SEC-INDEPENDENT PROTEIN TRANSLOCASE PROTEIN TATA"/>
    <property type="match status" value="1"/>
</dbReference>
<dbReference type="PANTHER" id="PTHR42982:SF1">
    <property type="entry name" value="SEC-INDEPENDENT PROTEIN TRANSLOCASE PROTEIN TATA"/>
    <property type="match status" value="1"/>
</dbReference>
<dbReference type="Pfam" id="PF02416">
    <property type="entry name" value="TatA_B_E"/>
    <property type="match status" value="1"/>
</dbReference>
<keyword id="KW-0997">Cell inner membrane</keyword>
<keyword id="KW-1003">Cell membrane</keyword>
<keyword id="KW-0472">Membrane</keyword>
<keyword id="KW-0653">Protein transport</keyword>
<keyword id="KW-1185">Reference proteome</keyword>
<keyword id="KW-0811">Translocation</keyword>
<keyword id="KW-0812">Transmembrane</keyword>
<keyword id="KW-1133">Transmembrane helix</keyword>
<keyword id="KW-0813">Transport</keyword>
<sequence>MGSFSIWHWLVVLAIVLLVFGTKRLTSGAKDLGSAVKEFKKGMRDEDKPNAQLGDESRTQDASRTAQDEHDRNAR</sequence>
<proteinExistence type="inferred from homology"/>
<evidence type="ECO:0000255" key="1">
    <source>
        <dbReference type="HAMAP-Rule" id="MF_00236"/>
    </source>
</evidence>
<evidence type="ECO:0000256" key="2">
    <source>
        <dbReference type="SAM" id="MobiDB-lite"/>
    </source>
</evidence>
<accession>B2FP54</accession>
<protein>
    <recommendedName>
        <fullName evidence="1">Sec-independent protein translocase protein TatA</fullName>
    </recommendedName>
</protein>
<organism>
    <name type="scientific">Stenotrophomonas maltophilia (strain K279a)</name>
    <dbReference type="NCBI Taxonomy" id="522373"/>
    <lineage>
        <taxon>Bacteria</taxon>
        <taxon>Pseudomonadati</taxon>
        <taxon>Pseudomonadota</taxon>
        <taxon>Gammaproteobacteria</taxon>
        <taxon>Lysobacterales</taxon>
        <taxon>Lysobacteraceae</taxon>
        <taxon>Stenotrophomonas</taxon>
        <taxon>Stenotrophomonas maltophilia group</taxon>
    </lineage>
</organism>
<feature type="chain" id="PRO_1000197908" description="Sec-independent protein translocase protein TatA">
    <location>
        <begin position="1"/>
        <end position="75"/>
    </location>
</feature>
<feature type="transmembrane region" description="Helical" evidence="1">
    <location>
        <begin position="1"/>
        <end position="21"/>
    </location>
</feature>
<feature type="region of interest" description="Disordered" evidence="2">
    <location>
        <begin position="41"/>
        <end position="75"/>
    </location>
</feature>
<gene>
    <name evidence="1" type="primary">tatA</name>
    <name type="ordered locus">Smlt4641</name>
</gene>